<accession>Q2YDJ4</accession>
<accession>Q8MJJ8</accession>
<organism>
    <name type="scientific">Bos taurus</name>
    <name type="common">Bovine</name>
    <dbReference type="NCBI Taxonomy" id="9913"/>
    <lineage>
        <taxon>Eukaryota</taxon>
        <taxon>Metazoa</taxon>
        <taxon>Chordata</taxon>
        <taxon>Craniata</taxon>
        <taxon>Vertebrata</taxon>
        <taxon>Euteleostomi</taxon>
        <taxon>Mammalia</taxon>
        <taxon>Eutheria</taxon>
        <taxon>Laurasiatheria</taxon>
        <taxon>Artiodactyla</taxon>
        <taxon>Ruminantia</taxon>
        <taxon>Pecora</taxon>
        <taxon>Bovidae</taxon>
        <taxon>Bovinae</taxon>
        <taxon>Bos</taxon>
    </lineage>
</organism>
<evidence type="ECO:0000250" key="1">
    <source>
        <dbReference type="UniProtKB" id="P49773"/>
    </source>
</evidence>
<evidence type="ECO:0000250" key="2">
    <source>
        <dbReference type="UniProtKB" id="Q9CPS6"/>
    </source>
</evidence>
<evidence type="ECO:0000250" key="3">
    <source>
        <dbReference type="UniProtKB" id="Q9NQE9"/>
    </source>
</evidence>
<evidence type="ECO:0000255" key="4">
    <source>
        <dbReference type="PROSITE-ProRule" id="PRU00464"/>
    </source>
</evidence>
<evidence type="ECO:0000256" key="5">
    <source>
        <dbReference type="SAM" id="MobiDB-lite"/>
    </source>
</evidence>
<evidence type="ECO:0000305" key="6"/>
<proteinExistence type="evidence at transcript level"/>
<keyword id="KW-0963">Cytoplasm</keyword>
<keyword id="KW-0378">Hydrolase</keyword>
<keyword id="KW-0547">Nucleotide-binding</keyword>
<keyword id="KW-0539">Nucleus</keyword>
<keyword id="KW-1185">Reference proteome</keyword>
<name>HINT3_BOVIN</name>
<reference key="1">
    <citation type="submission" date="2001-07" db="EMBL/GenBank/DDBJ databases">
        <title>A novel member of the histidine triad protein family with differential polyadenylation (Bovine HINT-4).</title>
        <authorList>
            <person name="Huang C.-H."/>
            <person name="Chen H."/>
            <person name="Peng J."/>
            <person name="Chen Y."/>
        </authorList>
    </citation>
    <scope>NUCLEOTIDE SEQUENCE [MRNA]</scope>
</reference>
<reference key="2">
    <citation type="submission" date="2005-11" db="EMBL/GenBank/DDBJ databases">
        <authorList>
            <consortium name="NIH - Mammalian Gene Collection (MGC) project"/>
        </authorList>
    </citation>
    <scope>NUCLEOTIDE SEQUENCE [LARGE SCALE MRNA]</scope>
    <source>
        <strain>Crossbred X Angus</strain>
        <tissue>Liver</tissue>
    </source>
</reference>
<protein>
    <recommendedName>
        <fullName evidence="3">Adenosine 5'-monophosphoramidase HINT3</fullName>
        <ecNumber evidence="3">3.9.1.-</ecNumber>
    </recommendedName>
    <alternativeName>
        <fullName>HINT-4</fullName>
    </alternativeName>
    <alternativeName>
        <fullName>Histidine triad nucleotide-binding protein 3</fullName>
        <shortName>HINT-3</shortName>
    </alternativeName>
</protein>
<dbReference type="EC" id="3.9.1.-" evidence="3"/>
<dbReference type="EMBL" id="AF398236">
    <property type="protein sequence ID" value="AAM90584.1"/>
    <property type="molecule type" value="mRNA"/>
</dbReference>
<dbReference type="EMBL" id="BC110193">
    <property type="protein sequence ID" value="AAI10194.1"/>
    <property type="molecule type" value="mRNA"/>
</dbReference>
<dbReference type="RefSeq" id="NP_776766.1">
    <property type="nucleotide sequence ID" value="NM_174341.2"/>
</dbReference>
<dbReference type="SMR" id="Q2YDJ4"/>
<dbReference type="FunCoup" id="Q2YDJ4">
    <property type="interactions" value="1702"/>
</dbReference>
<dbReference type="STRING" id="9913.ENSBTAP00000002542"/>
<dbReference type="PaxDb" id="9913-ENSBTAP00000002542"/>
<dbReference type="GeneID" id="281817"/>
<dbReference type="KEGG" id="bta:281817"/>
<dbReference type="CTD" id="135114"/>
<dbReference type="VEuPathDB" id="HostDB:ENSBTAG00000001956"/>
<dbReference type="eggNOG" id="KOG4359">
    <property type="taxonomic scope" value="Eukaryota"/>
</dbReference>
<dbReference type="HOGENOM" id="CLU_056776_4_2_1"/>
<dbReference type="InParanoid" id="Q2YDJ4"/>
<dbReference type="OMA" id="EKKCIFC"/>
<dbReference type="OrthoDB" id="1915375at2759"/>
<dbReference type="TreeFam" id="TF353069"/>
<dbReference type="Proteomes" id="UP000009136">
    <property type="component" value="Chromosome 9"/>
</dbReference>
<dbReference type="Bgee" id="ENSBTAG00000001956">
    <property type="expression patterns" value="Expressed in semen and 109 other cell types or tissues"/>
</dbReference>
<dbReference type="GO" id="GO:0005737">
    <property type="term" value="C:cytoplasm"/>
    <property type="evidence" value="ECO:0000250"/>
    <property type="project" value="UniProtKB"/>
</dbReference>
<dbReference type="GO" id="GO:0005634">
    <property type="term" value="C:nucleus"/>
    <property type="evidence" value="ECO:0000250"/>
    <property type="project" value="UniProtKB"/>
</dbReference>
<dbReference type="GO" id="GO:0043530">
    <property type="term" value="F:adenosine 5'-monophosphoramidase activity"/>
    <property type="evidence" value="ECO:0000250"/>
    <property type="project" value="UniProtKB"/>
</dbReference>
<dbReference type="GO" id="GO:0000166">
    <property type="term" value="F:nucleotide binding"/>
    <property type="evidence" value="ECO:0007669"/>
    <property type="project" value="UniProtKB-KW"/>
</dbReference>
<dbReference type="CDD" id="cd01278">
    <property type="entry name" value="aprataxin_related"/>
    <property type="match status" value="1"/>
</dbReference>
<dbReference type="Gene3D" id="3.30.428.10">
    <property type="entry name" value="HIT-like"/>
    <property type="match status" value="1"/>
</dbReference>
<dbReference type="InterPro" id="IPR011146">
    <property type="entry name" value="HIT-like"/>
</dbReference>
<dbReference type="InterPro" id="IPR036265">
    <property type="entry name" value="HIT-like_sf"/>
</dbReference>
<dbReference type="PANTHER" id="PTHR12486:SF5">
    <property type="entry name" value="ADENOSINE 5'-MONOPHOSPHORAMIDASE HINT3"/>
    <property type="match status" value="1"/>
</dbReference>
<dbReference type="PANTHER" id="PTHR12486">
    <property type="entry name" value="APRATAXIN-RELATED"/>
    <property type="match status" value="1"/>
</dbReference>
<dbReference type="Pfam" id="PF11969">
    <property type="entry name" value="DcpS_C"/>
    <property type="match status" value="1"/>
</dbReference>
<dbReference type="SUPFAM" id="SSF54197">
    <property type="entry name" value="HIT-like"/>
    <property type="match status" value="1"/>
</dbReference>
<dbReference type="PROSITE" id="PS51084">
    <property type="entry name" value="HIT_2"/>
    <property type="match status" value="1"/>
</dbReference>
<comment type="function">
    <text evidence="3">Exhibits adenosine 5'-monophosphoramidase activity, hydrolyzing purine nucleotide phosphoramidates with a single phosphate group such as adenosine 5'monophosphoramidate (AMP-NH2) to yield AMP and NH2 (By similarity). Hydrolyzes lysyl-AMP (AMP-N-epsilon-(N-alpha-acetyl lysine methyl ester)) generated by lysine tRNA ligase (By similarity).</text>
</comment>
<comment type="catalytic activity">
    <reaction evidence="3">
        <text>adenosine 5'-phosphoramidate + H2O = AMP + NH4(+)</text>
        <dbReference type="Rhea" id="RHEA:67916"/>
        <dbReference type="ChEBI" id="CHEBI:15377"/>
        <dbReference type="ChEBI" id="CHEBI:28938"/>
        <dbReference type="ChEBI" id="CHEBI:57890"/>
        <dbReference type="ChEBI" id="CHEBI:456215"/>
    </reaction>
</comment>
<comment type="subunit">
    <text evidence="2 3">Forms dimers to octamers and even larger oligomer (By similarity). Interacts with CALM1 (By similarity).</text>
</comment>
<comment type="subcellular location">
    <subcellularLocation>
        <location evidence="3">Cytoplasm</location>
    </subcellularLocation>
    <subcellularLocation>
        <location evidence="3">Nucleus</location>
    </subcellularLocation>
</comment>
<comment type="similarity">
    <text evidence="6">Belongs to the HINT family.</text>
</comment>
<sequence length="182" mass="20470">MMEEEECGLGKSCARSEPVAAAQPAGSPGETPAVAAESPELANYSSKCVFCRIAAHQDPGTELLHCENEDLVCFKDIKPAAPHHYLVVPKKHFENCKYLKKDQIELIENMVTVGKAILERNNFTDFENTRMGFHVSPFCSIAHLHLHVLAPADQLSFMSRLVYRVNSYWFITADYLIEKLRT</sequence>
<gene>
    <name type="primary">HINT3</name>
    <name type="synonym">HINT4</name>
</gene>
<feature type="chain" id="PRO_0000324326" description="Adenosine 5'-monophosphoramidase HINT3">
    <location>
        <begin position="1"/>
        <end position="182"/>
    </location>
</feature>
<feature type="domain" description="HIT" evidence="4">
    <location>
        <begin position="49"/>
        <end position="158"/>
    </location>
</feature>
<feature type="region of interest" description="Disordered" evidence="5">
    <location>
        <begin position="1"/>
        <end position="34"/>
    </location>
</feature>
<feature type="short sequence motif" description="Histidine triad motif">
    <location>
        <begin position="143"/>
        <end position="147"/>
    </location>
</feature>
<feature type="active site" description="Tele-AMP-histidine intermediate" evidence="3">
    <location>
        <position position="145"/>
    </location>
</feature>
<feature type="binding site" evidence="1">
    <location>
        <begin position="76"/>
        <end position="77"/>
    </location>
    <ligand>
        <name>AMP</name>
        <dbReference type="ChEBI" id="CHEBI:456215"/>
    </ligand>
</feature>
<feature type="binding site" evidence="1">
    <location>
        <begin position="145"/>
        <end position="147"/>
    </location>
    <ligand>
        <name>AMP</name>
        <dbReference type="ChEBI" id="CHEBI:456215"/>
    </ligand>
</feature>
<feature type="sequence conflict" description="In Ref. 1; AAM90584." evidence="6" ref="1">
    <original>R</original>
    <variation>K</variation>
    <location>
        <position position="164"/>
    </location>
</feature>
<feature type="sequence conflict" description="In Ref. 1; AAM90584." evidence="6" ref="1">
    <original>F</original>
    <variation>V</variation>
    <location>
        <position position="170"/>
    </location>
</feature>